<feature type="signal peptide" evidence="2">
    <location>
        <begin position="1"/>
        <end position="19"/>
    </location>
</feature>
<feature type="chain" id="PRO_0000032839" description="Superoxide dismutase [Cu-Zn]">
    <location>
        <begin position="20"/>
        <end position="227"/>
    </location>
</feature>
<feature type="region of interest" description="Disordered" evidence="3">
    <location>
        <begin position="23"/>
        <end position="55"/>
    </location>
</feature>
<feature type="compositionally biased region" description="Low complexity" evidence="3">
    <location>
        <begin position="39"/>
        <end position="55"/>
    </location>
</feature>
<feature type="binding site" evidence="1">
    <location>
        <position position="103"/>
    </location>
    <ligand>
        <name>Cu cation</name>
        <dbReference type="ChEBI" id="CHEBI:23378"/>
        <note>catalytic</note>
    </ligand>
</feature>
<feature type="binding site" evidence="1">
    <location>
        <position position="105"/>
    </location>
    <ligand>
        <name>Cu cation</name>
        <dbReference type="ChEBI" id="CHEBI:23378"/>
        <note>catalytic</note>
    </ligand>
</feature>
<feature type="binding site" evidence="1">
    <location>
        <position position="145"/>
    </location>
    <ligand>
        <name>Zn(2+)</name>
        <dbReference type="ChEBI" id="CHEBI:29105"/>
        <note>structural</note>
    </ligand>
</feature>
<feature type="binding site" evidence="1">
    <location>
        <position position="182"/>
    </location>
    <ligand>
        <name>Cu cation</name>
        <dbReference type="ChEBI" id="CHEBI:23378"/>
        <note>catalytic</note>
    </ligand>
</feature>
<feature type="lipid moiety-binding region" description="N-palmitoyl cysteine" evidence="2">
    <location>
        <position position="20"/>
    </location>
</feature>
<feature type="lipid moiety-binding region" description="S-diacylglycerol cysteine" evidence="2">
    <location>
        <position position="20"/>
    </location>
</feature>
<feature type="disulfide bond" evidence="1">
    <location>
        <begin position="110"/>
        <end position="221"/>
    </location>
</feature>
<feature type="sequence conflict" description="In Ref. 1; AAK20038." evidence="4" ref="1">
    <original>ALG</original>
    <variation>GC</variation>
    <location>
        <begin position="16"/>
        <end position="18"/>
    </location>
</feature>
<feature type="sequence conflict" description="In Ref. 1; AAK20038." evidence="4" ref="1">
    <original>D</original>
    <variation>N</variation>
    <location>
        <position position="186"/>
    </location>
</feature>
<protein>
    <recommendedName>
        <fullName>Superoxide dismutase [Cu-Zn]</fullName>
        <ecNumber>1.15.1.1</ecNumber>
    </recommendedName>
</protein>
<keyword id="KW-0049">Antioxidant</keyword>
<keyword id="KW-1003">Cell membrane</keyword>
<keyword id="KW-0186">Copper</keyword>
<keyword id="KW-1015">Disulfide bond</keyword>
<keyword id="KW-0449">Lipoprotein</keyword>
<keyword id="KW-0472">Membrane</keyword>
<keyword id="KW-0479">Metal-binding</keyword>
<keyword id="KW-0560">Oxidoreductase</keyword>
<keyword id="KW-0564">Palmitate</keyword>
<keyword id="KW-1185">Reference proteome</keyword>
<keyword id="KW-0732">Signal</keyword>
<keyword id="KW-0862">Zinc</keyword>
<name>SODC_MYCPA</name>
<proteinExistence type="inferred from homology"/>
<accession>Q9AGW2</accession>
<sequence length="227" mass="22466">MPKLLPPVVLAGCVVALGACSSPQHASSLPGTTPAVWTGSPSPSGAGAAEAAPAAAPSITTHLKAPDGTQVATAKFEFSNGYATVTIETTANGVLTPGFHGVHIHKVGKCEPSSVAPTGGAPGDFLSAGGHFQAPGHTGEPASGDLTSLQVRKDGSGTLVTTTDAFTMEDLLGGRKTAIIIHAGADNFANIPAERYNQTNGTPGPDEMTMSTGDAGKRVACGVIGAG</sequence>
<reference key="1">
    <citation type="journal article" date="2001" name="Microbios">
        <title>Identification, cloning and expression of sodC from an alkaline phosphatase gene fusion library of Mycobacterium avium subspecies paratuberculosis.</title>
        <authorList>
            <person name="Dupont C."/>
            <person name="Murray A."/>
        </authorList>
    </citation>
    <scope>NUCLEOTIDE SEQUENCE [GENOMIC DNA]</scope>
</reference>
<reference key="2">
    <citation type="journal article" date="2005" name="Proc. Natl. Acad. Sci. U.S.A.">
        <title>The complete genome sequence of Mycobacterium avium subspecies paratuberculosis.</title>
        <authorList>
            <person name="Li L."/>
            <person name="Bannantine J.P."/>
            <person name="Zhang Q."/>
            <person name="Amonsin A."/>
            <person name="May B.J."/>
            <person name="Alt D."/>
            <person name="Banerji N."/>
            <person name="Kanjilal S."/>
            <person name="Kapur V."/>
        </authorList>
    </citation>
    <scope>NUCLEOTIDE SEQUENCE [LARGE SCALE GENOMIC DNA]</scope>
    <source>
        <strain>ATCC BAA-968 / K-10</strain>
    </source>
</reference>
<organism>
    <name type="scientific">Mycolicibacterium paratuberculosis (strain ATCC BAA-968 / K-10)</name>
    <name type="common">Mycobacterium paratuberculosis</name>
    <dbReference type="NCBI Taxonomy" id="262316"/>
    <lineage>
        <taxon>Bacteria</taxon>
        <taxon>Bacillati</taxon>
        <taxon>Actinomycetota</taxon>
        <taxon>Actinomycetes</taxon>
        <taxon>Mycobacteriales</taxon>
        <taxon>Mycobacteriaceae</taxon>
        <taxon>Mycobacterium</taxon>
        <taxon>Mycobacterium avium complex (MAC)</taxon>
    </lineage>
</organism>
<dbReference type="EC" id="1.15.1.1"/>
<dbReference type="EMBL" id="AF326234">
    <property type="protein sequence ID" value="AAK20038.1"/>
    <property type="molecule type" value="Genomic_DNA"/>
</dbReference>
<dbReference type="EMBL" id="AE016958">
    <property type="protein sequence ID" value="AAS06471.1"/>
    <property type="molecule type" value="Genomic_DNA"/>
</dbReference>
<dbReference type="RefSeq" id="WP_003873788.1">
    <property type="nucleotide sequence ID" value="NZ_CP106873.1"/>
</dbReference>
<dbReference type="SMR" id="Q9AGW2"/>
<dbReference type="STRING" id="262316.MAP_3921"/>
<dbReference type="KEGG" id="mpa:MAP_3921"/>
<dbReference type="eggNOG" id="COG2032">
    <property type="taxonomic scope" value="Bacteria"/>
</dbReference>
<dbReference type="HOGENOM" id="CLU_056632_8_0_11"/>
<dbReference type="Proteomes" id="UP000000580">
    <property type="component" value="Chromosome"/>
</dbReference>
<dbReference type="GO" id="GO:0005886">
    <property type="term" value="C:plasma membrane"/>
    <property type="evidence" value="ECO:0007669"/>
    <property type="project" value="UniProtKB-SubCell"/>
</dbReference>
<dbReference type="GO" id="GO:0005507">
    <property type="term" value="F:copper ion binding"/>
    <property type="evidence" value="ECO:0007669"/>
    <property type="project" value="InterPro"/>
</dbReference>
<dbReference type="GO" id="GO:0004784">
    <property type="term" value="F:superoxide dismutase activity"/>
    <property type="evidence" value="ECO:0007669"/>
    <property type="project" value="UniProtKB-EC"/>
</dbReference>
<dbReference type="CDD" id="cd00305">
    <property type="entry name" value="Cu-Zn_Superoxide_Dismutase"/>
    <property type="match status" value="1"/>
</dbReference>
<dbReference type="FunFam" id="2.60.40.200:FF:000012">
    <property type="entry name" value="Superoxide dismutase [Cu-Zn]"/>
    <property type="match status" value="1"/>
</dbReference>
<dbReference type="Gene3D" id="2.60.40.200">
    <property type="entry name" value="Superoxide dismutase, copper/zinc binding domain"/>
    <property type="match status" value="1"/>
</dbReference>
<dbReference type="InterPro" id="IPR036423">
    <property type="entry name" value="SOD-like_Cu/Zn_dom_sf"/>
</dbReference>
<dbReference type="InterPro" id="IPR024134">
    <property type="entry name" value="SOD_Cu/Zn_/chaperone"/>
</dbReference>
<dbReference type="InterPro" id="IPR018152">
    <property type="entry name" value="SOD_Cu/Zn_BS"/>
</dbReference>
<dbReference type="InterPro" id="IPR001424">
    <property type="entry name" value="SOD_Cu_Zn_dom"/>
</dbReference>
<dbReference type="NCBIfam" id="NF047631">
    <property type="entry name" value="SodCMycob"/>
    <property type="match status" value="1"/>
</dbReference>
<dbReference type="PANTHER" id="PTHR10003">
    <property type="entry name" value="SUPEROXIDE DISMUTASE CU-ZN -RELATED"/>
    <property type="match status" value="1"/>
</dbReference>
<dbReference type="Pfam" id="PF00080">
    <property type="entry name" value="Sod_Cu"/>
    <property type="match status" value="1"/>
</dbReference>
<dbReference type="PRINTS" id="PR00068">
    <property type="entry name" value="CUZNDISMTASE"/>
</dbReference>
<dbReference type="SUPFAM" id="SSF49329">
    <property type="entry name" value="Cu,Zn superoxide dismutase-like"/>
    <property type="match status" value="1"/>
</dbReference>
<dbReference type="PROSITE" id="PS51257">
    <property type="entry name" value="PROKAR_LIPOPROTEIN"/>
    <property type="match status" value="1"/>
</dbReference>
<dbReference type="PROSITE" id="PS00332">
    <property type="entry name" value="SOD_CU_ZN_2"/>
    <property type="match status" value="1"/>
</dbReference>
<gene>
    <name type="primary">sodC</name>
    <name type="ordered locus">MAP_3921</name>
</gene>
<comment type="function">
    <text evidence="1">Destroys radicals which are normally produced within the cells and which are toxic to biological systems. May play a role in favoring mycobacterial survival in phagocytes (By similarity).</text>
</comment>
<comment type="catalytic activity">
    <reaction>
        <text>2 superoxide + 2 H(+) = H2O2 + O2</text>
        <dbReference type="Rhea" id="RHEA:20696"/>
        <dbReference type="ChEBI" id="CHEBI:15378"/>
        <dbReference type="ChEBI" id="CHEBI:15379"/>
        <dbReference type="ChEBI" id="CHEBI:16240"/>
        <dbReference type="ChEBI" id="CHEBI:18421"/>
        <dbReference type="EC" id="1.15.1.1"/>
    </reaction>
</comment>
<comment type="cofactor">
    <cofactor evidence="4">
        <name>Cu cation</name>
        <dbReference type="ChEBI" id="CHEBI:23378"/>
    </cofactor>
    <text evidence="4">Binds 1 copper ion per subunit.</text>
</comment>
<comment type="cofactor">
    <cofactor evidence="4">
        <name>Zn(2+)</name>
        <dbReference type="ChEBI" id="CHEBI:29105"/>
    </cofactor>
    <text evidence="4">Binds 1 zinc ion per subunit.</text>
</comment>
<comment type="subcellular location">
    <subcellularLocation>
        <location evidence="2">Cell membrane</location>
        <topology evidence="2">Lipid-anchor</topology>
    </subcellularLocation>
</comment>
<comment type="similarity">
    <text evidence="4">Belongs to the Cu-Zn superoxide dismutase family.</text>
</comment>
<comment type="caution">
    <text evidence="4">Lacks three conserved histidine residues that bind copper and zinc.</text>
</comment>
<evidence type="ECO:0000250" key="1"/>
<evidence type="ECO:0000255" key="2">
    <source>
        <dbReference type="PROSITE-ProRule" id="PRU00303"/>
    </source>
</evidence>
<evidence type="ECO:0000256" key="3">
    <source>
        <dbReference type="SAM" id="MobiDB-lite"/>
    </source>
</evidence>
<evidence type="ECO:0000305" key="4"/>